<gene>
    <name evidence="1" type="primary">psd</name>
    <name type="ordered locus">BURPS1710b_1422</name>
</gene>
<evidence type="ECO:0000255" key="1">
    <source>
        <dbReference type="HAMAP-Rule" id="MF_00664"/>
    </source>
</evidence>
<accession>Q3JUC1</accession>
<dbReference type="EC" id="4.1.1.65" evidence="1"/>
<dbReference type="EMBL" id="CP000124">
    <property type="protein sequence ID" value="ABA50302.1"/>
    <property type="molecule type" value="Genomic_DNA"/>
</dbReference>
<dbReference type="RefSeq" id="WP_004531897.1">
    <property type="nucleotide sequence ID" value="NC_007434.1"/>
</dbReference>
<dbReference type="EnsemblBacteria" id="ABA50302">
    <property type="protein sequence ID" value="ABA50302"/>
    <property type="gene ID" value="BURPS1710b_1422"/>
</dbReference>
<dbReference type="KEGG" id="bpm:BURPS1710b_1422"/>
<dbReference type="HOGENOM" id="CLU_072492_0_0_4"/>
<dbReference type="UniPathway" id="UPA00558">
    <property type="reaction ID" value="UER00616"/>
</dbReference>
<dbReference type="Proteomes" id="UP000002700">
    <property type="component" value="Chromosome I"/>
</dbReference>
<dbReference type="GO" id="GO:0005886">
    <property type="term" value="C:plasma membrane"/>
    <property type="evidence" value="ECO:0007669"/>
    <property type="project" value="UniProtKB-SubCell"/>
</dbReference>
<dbReference type="GO" id="GO:0004609">
    <property type="term" value="F:phosphatidylserine decarboxylase activity"/>
    <property type="evidence" value="ECO:0007669"/>
    <property type="project" value="UniProtKB-UniRule"/>
</dbReference>
<dbReference type="GO" id="GO:0006646">
    <property type="term" value="P:phosphatidylethanolamine biosynthetic process"/>
    <property type="evidence" value="ECO:0007669"/>
    <property type="project" value="UniProtKB-UniRule"/>
</dbReference>
<dbReference type="HAMAP" id="MF_00664">
    <property type="entry name" value="PS_decarb_PSD_A"/>
    <property type="match status" value="1"/>
</dbReference>
<dbReference type="InterPro" id="IPR003817">
    <property type="entry name" value="PS_Dcarbxylase"/>
</dbReference>
<dbReference type="InterPro" id="IPR033175">
    <property type="entry name" value="PSD-A"/>
</dbReference>
<dbReference type="NCBIfam" id="TIGR00164">
    <property type="entry name" value="AS_decarb"/>
    <property type="match status" value="1"/>
</dbReference>
<dbReference type="NCBIfam" id="NF003678">
    <property type="entry name" value="PRK05305.1-2"/>
    <property type="match status" value="1"/>
</dbReference>
<dbReference type="NCBIfam" id="NF003680">
    <property type="entry name" value="PRK05305.1-5"/>
    <property type="match status" value="1"/>
</dbReference>
<dbReference type="NCBIfam" id="NF003685">
    <property type="entry name" value="PRK05305.2-5"/>
    <property type="match status" value="1"/>
</dbReference>
<dbReference type="PANTHER" id="PTHR35809">
    <property type="entry name" value="ARCHAETIDYLSERINE DECARBOXYLASE PROENZYME-RELATED"/>
    <property type="match status" value="1"/>
</dbReference>
<dbReference type="PANTHER" id="PTHR35809:SF1">
    <property type="entry name" value="ARCHAETIDYLSERINE DECARBOXYLASE PROENZYME-RELATED"/>
    <property type="match status" value="1"/>
</dbReference>
<dbReference type="Pfam" id="PF02666">
    <property type="entry name" value="PS_Dcarbxylase"/>
    <property type="match status" value="1"/>
</dbReference>
<name>PSD_BURP1</name>
<sequence>MNYPHPIIAREGWPFIAIAAVVALLIHAVGGFGLAWPFWLLLVFVVQFFRDPPRAIPTQANAVLCPADGRIVAVETAHDPYADREALKISVFMNVFNVHSQRSPVDGAVQKVEYFPGAFLNAALDKASAENERNAVVIQTGAGHTVTAVQIAGLVARRILCYVRAGEPLSRGQRYGFIRFGSRVDVYLPKGSRARVSIGEKVSASSTILAELPEQP</sequence>
<reference key="1">
    <citation type="journal article" date="2010" name="Genome Biol. Evol.">
        <title>Continuing evolution of Burkholderia mallei through genome reduction and large-scale rearrangements.</title>
        <authorList>
            <person name="Losada L."/>
            <person name="Ronning C.M."/>
            <person name="DeShazer D."/>
            <person name="Woods D."/>
            <person name="Fedorova N."/>
            <person name="Kim H.S."/>
            <person name="Shabalina S.A."/>
            <person name="Pearson T.R."/>
            <person name="Brinkac L."/>
            <person name="Tan P."/>
            <person name="Nandi T."/>
            <person name="Crabtree J."/>
            <person name="Badger J."/>
            <person name="Beckstrom-Sternberg S."/>
            <person name="Saqib M."/>
            <person name="Schutzer S.E."/>
            <person name="Keim P."/>
            <person name="Nierman W.C."/>
        </authorList>
    </citation>
    <scope>NUCLEOTIDE SEQUENCE [LARGE SCALE GENOMIC DNA]</scope>
    <source>
        <strain>1710b</strain>
    </source>
</reference>
<organism>
    <name type="scientific">Burkholderia pseudomallei (strain 1710b)</name>
    <dbReference type="NCBI Taxonomy" id="320372"/>
    <lineage>
        <taxon>Bacteria</taxon>
        <taxon>Pseudomonadati</taxon>
        <taxon>Pseudomonadota</taxon>
        <taxon>Betaproteobacteria</taxon>
        <taxon>Burkholderiales</taxon>
        <taxon>Burkholderiaceae</taxon>
        <taxon>Burkholderia</taxon>
        <taxon>pseudomallei group</taxon>
    </lineage>
</organism>
<feature type="chain" id="PRO_0000262193" description="Phosphatidylserine decarboxylase beta chain" evidence="1">
    <location>
        <begin position="1"/>
        <end position="181"/>
    </location>
</feature>
<feature type="chain" id="PRO_0000262194" description="Phosphatidylserine decarboxylase alpha chain" evidence="1">
    <location>
        <begin position="182"/>
        <end position="216"/>
    </location>
</feature>
<feature type="active site" description="Schiff-base intermediate with substrate; via pyruvic acid" evidence="1">
    <location>
        <position position="182"/>
    </location>
</feature>
<feature type="site" description="Cleavage (non-hydrolytic); by autocatalysis" evidence="1">
    <location>
        <begin position="181"/>
        <end position="182"/>
    </location>
</feature>
<feature type="modified residue" description="Pyruvic acid (Ser); by autocatalysis" evidence="1">
    <location>
        <position position="182"/>
    </location>
</feature>
<comment type="function">
    <text evidence="1">Catalyzes the formation of phosphatidylethanolamine (PtdEtn) from phosphatidylserine (PtdSer).</text>
</comment>
<comment type="catalytic activity">
    <reaction evidence="1">
        <text>a 1,2-diacyl-sn-glycero-3-phospho-L-serine + H(+) = a 1,2-diacyl-sn-glycero-3-phosphoethanolamine + CO2</text>
        <dbReference type="Rhea" id="RHEA:20828"/>
        <dbReference type="ChEBI" id="CHEBI:15378"/>
        <dbReference type="ChEBI" id="CHEBI:16526"/>
        <dbReference type="ChEBI" id="CHEBI:57262"/>
        <dbReference type="ChEBI" id="CHEBI:64612"/>
        <dbReference type="EC" id="4.1.1.65"/>
    </reaction>
</comment>
<comment type="cofactor">
    <cofactor evidence="1">
        <name>pyruvate</name>
        <dbReference type="ChEBI" id="CHEBI:15361"/>
    </cofactor>
    <text evidence="1">Binds 1 pyruvoyl group covalently per subunit.</text>
</comment>
<comment type="pathway">
    <text evidence="1">Phospholipid metabolism; phosphatidylethanolamine biosynthesis; phosphatidylethanolamine from CDP-diacylglycerol: step 2/2.</text>
</comment>
<comment type="subunit">
    <text evidence="1">Heterodimer of a large membrane-associated beta subunit and a small pyruvoyl-containing alpha subunit.</text>
</comment>
<comment type="subcellular location">
    <subcellularLocation>
        <location evidence="1">Cell membrane</location>
        <topology evidence="1">Peripheral membrane protein</topology>
    </subcellularLocation>
</comment>
<comment type="PTM">
    <text evidence="1">Is synthesized initially as an inactive proenzyme. Formation of the active enzyme involves a self-maturation process in which the active site pyruvoyl group is generated from an internal serine residue via an autocatalytic post-translational modification. Two non-identical subunits are generated from the proenzyme in this reaction, and the pyruvate is formed at the N-terminus of the alpha chain, which is derived from the carboxyl end of the proenzyme. The post-translation cleavage follows an unusual pathway, termed non-hydrolytic serinolysis, in which the side chain hydroxyl group of the serine supplies its oxygen atom to form the C-terminus of the beta chain, while the remainder of the serine residue undergoes an oxidative deamination to produce ammonia and the pyruvoyl prosthetic group on the alpha chain.</text>
</comment>
<comment type="similarity">
    <text evidence="1">Belongs to the phosphatidylserine decarboxylase family. PSD-A subfamily.</text>
</comment>
<proteinExistence type="inferred from homology"/>
<keyword id="KW-1003">Cell membrane</keyword>
<keyword id="KW-0210">Decarboxylase</keyword>
<keyword id="KW-0444">Lipid biosynthesis</keyword>
<keyword id="KW-0443">Lipid metabolism</keyword>
<keyword id="KW-0456">Lyase</keyword>
<keyword id="KW-0472">Membrane</keyword>
<keyword id="KW-0594">Phospholipid biosynthesis</keyword>
<keyword id="KW-1208">Phospholipid metabolism</keyword>
<keyword id="KW-0670">Pyruvate</keyword>
<keyword id="KW-0865">Zymogen</keyword>
<protein>
    <recommendedName>
        <fullName evidence="1">Phosphatidylserine decarboxylase proenzyme</fullName>
        <ecNumber evidence="1">4.1.1.65</ecNumber>
    </recommendedName>
    <component>
        <recommendedName>
            <fullName evidence="1">Phosphatidylserine decarboxylase alpha chain</fullName>
        </recommendedName>
    </component>
    <component>
        <recommendedName>
            <fullName evidence="1">Phosphatidylserine decarboxylase beta chain</fullName>
        </recommendedName>
    </component>
</protein>